<reference evidence="7 8" key="1">
    <citation type="journal article" date="2006" name="Nat. Cell Biol.">
        <title>Syndecan-4 regulates non-canonical Wnt signalling and is essential for convergent and extension movements in Xenopus embryos.</title>
        <authorList>
            <person name="Munoz R."/>
            <person name="Moreno M."/>
            <person name="Oliva C."/>
            <person name="Orbenes C."/>
            <person name="Larrain J."/>
        </authorList>
    </citation>
    <scope>NUCLEOTIDE SEQUENCE [MRNA]</scope>
    <scope>FUNCTION</scope>
    <scope>INTERACTION WITH DVL2 AND FZD7</scope>
    <scope>TISSUE SPECIFICITY</scope>
    <scope>DEVELOPMENTAL STAGE</scope>
</reference>
<reference evidence="7" key="2">
    <citation type="journal article" date="2006" name="ScientificWorldJournal">
        <title>xSyndecan-4 regulates gastrulation and neural tube closure in Xenopus embryos.</title>
        <authorList>
            <person name="Munoz R."/>
            <person name="Larrain J."/>
        </authorList>
    </citation>
    <scope>FUNCTION</scope>
</reference>
<organism>
    <name type="scientific">Xenopus laevis</name>
    <name type="common">African clawed frog</name>
    <dbReference type="NCBI Taxonomy" id="8355"/>
    <lineage>
        <taxon>Eukaryota</taxon>
        <taxon>Metazoa</taxon>
        <taxon>Chordata</taxon>
        <taxon>Craniata</taxon>
        <taxon>Vertebrata</taxon>
        <taxon>Euteleostomi</taxon>
        <taxon>Amphibia</taxon>
        <taxon>Batrachia</taxon>
        <taxon>Anura</taxon>
        <taxon>Pipoidea</taxon>
        <taxon>Pipidae</taxon>
        <taxon>Xenopodinae</taxon>
        <taxon>Xenopus</taxon>
        <taxon>Xenopus</taxon>
    </lineage>
</organism>
<gene>
    <name type="primary">sdc4-b</name>
    <name evidence="6" type="synonym">sdc4.2</name>
</gene>
<name>SDC4B_XENLA</name>
<sequence length="205" mass="22929">MNRLLLLLALVLSGVAAESIRETETMDPTSMLEYESSGSFTDEVFVDEDDDDDYEDGVDYEIDSESDNDEDYSGSGDDDFDDEDNVEDEDEEETTTLGNQIPEHDFDETKTGRKFDTFNENNEIDNDIRHPAKPKTLEPSNEIPMASIGSSGFFQRTEVIVAIIAGTLVGLVVAVSFIVFLVIRRNQNGDLVKKPIYKKTSTMEV</sequence>
<evidence type="ECO:0000250" key="1">
    <source>
        <dbReference type="UniProtKB" id="P34901"/>
    </source>
</evidence>
<evidence type="ECO:0000255" key="2"/>
<evidence type="ECO:0000256" key="3">
    <source>
        <dbReference type="SAM" id="MobiDB-lite"/>
    </source>
</evidence>
<evidence type="ECO:0000269" key="4">
    <source>
    </source>
</evidence>
<evidence type="ECO:0000269" key="5">
    <source>
    </source>
</evidence>
<evidence type="ECO:0000303" key="6">
    <source>
    </source>
</evidence>
<evidence type="ECO:0000305" key="7"/>
<evidence type="ECO:0000312" key="8">
    <source>
        <dbReference type="EMBL" id="ABA12132.1"/>
    </source>
</evidence>
<feature type="signal peptide" evidence="2">
    <location>
        <begin position="1"/>
        <end position="17"/>
    </location>
</feature>
<feature type="chain" id="PRO_0000283777" description="Syndecan 4-B" evidence="2">
    <location>
        <begin position="18"/>
        <end position="205"/>
    </location>
</feature>
<feature type="topological domain" description="Extracellular" evidence="2">
    <location>
        <begin position="18"/>
        <end position="162"/>
    </location>
</feature>
<feature type="transmembrane region" description="Helical" evidence="2">
    <location>
        <begin position="163"/>
        <end position="183"/>
    </location>
</feature>
<feature type="topological domain" description="Cytoplasmic" evidence="2">
    <location>
        <begin position="184"/>
        <end position="205"/>
    </location>
</feature>
<feature type="region of interest" description="Disordered" evidence="3">
    <location>
        <begin position="26"/>
        <end position="113"/>
    </location>
</feature>
<feature type="compositionally biased region" description="Acidic residues" evidence="3">
    <location>
        <begin position="44"/>
        <end position="94"/>
    </location>
</feature>
<feature type="compositionally biased region" description="Basic and acidic residues" evidence="3">
    <location>
        <begin position="102"/>
        <end position="113"/>
    </location>
</feature>
<feature type="glycosylation site" description="O-linked (Xyl...) (glycosaminoglycan) serine" evidence="1">
    <location>
        <position position="37"/>
    </location>
</feature>
<feature type="glycosylation site" description="O-linked (Xyl...) (glycosaminoglycan) serine" evidence="1">
    <location>
        <position position="73"/>
    </location>
</feature>
<feature type="glycosylation site" description="O-linked (Xyl...) (glycosaminoglycan) serine" evidence="1">
    <location>
        <position position="75"/>
    </location>
</feature>
<protein>
    <recommendedName>
        <fullName>Syndecan 4-B</fullName>
    </recommendedName>
    <alternativeName>
        <fullName>Syndecan-4.2</fullName>
        <shortName>xSyn4.2</shortName>
    </alternativeName>
</protein>
<comment type="function">
    <text evidence="4 5 7">Cell surface proteoglycan. Regulates non-canonical Wnt signaling, being necessary and sufficient for fibronectrin-mediated translocation of dvl2/dsh to the plasma membrane. Required for proper convergent extension movements during gastrulation, which shape the neural plate, and for subsequent neural tube closure.</text>
</comment>
<comment type="subunit">
    <text evidence="4">Interacts with the Wnt receptor fzd7 and its signal transducer dvl2/dsh.</text>
</comment>
<comment type="subcellular location">
    <subcellularLocation>
        <location evidence="2">Membrane</location>
        <topology evidence="2">Single-pass type I membrane protein</topology>
    </subcellularLocation>
</comment>
<comment type="tissue specificity">
    <text evidence="4">Expressed in the animal hemisphere from the 4-cell to the blastula stage. During gastrulation, expressed in the involuting dorsal mesoderm and ectoderm. After involution, localized mainly to the anterior neuroectoderm. At later stages, expressed in the brain, branchial arches, pronephros, tailbud, and at low levels in the somites.</text>
</comment>
<comment type="developmental stage">
    <text evidence="4">Expressed both maternally and zygotically.</text>
</comment>
<comment type="PTM">
    <text evidence="1">O-glycosylated; contains both chondroitin sulfate and heparan sulfate. Ser-37, Ser-73 and Ser-75 can all be modified by either chondroitin sulfate or heparan sulfate, and the protein exists in forms that contain only chondroitin sulfate, only heparan sulfate and both chondroitin sulfate and heparan sulfate.</text>
</comment>
<comment type="similarity">
    <text evidence="2">Belongs to the syndecan proteoglycan family.</text>
</comment>
<accession>Q1AGV6</accession>
<keyword id="KW-0217">Developmental protein</keyword>
<keyword id="KW-0306">Gastrulation</keyword>
<keyword id="KW-0325">Glycoprotein</keyword>
<keyword id="KW-0357">Heparan sulfate</keyword>
<keyword id="KW-0472">Membrane</keyword>
<keyword id="KW-0654">Proteoglycan</keyword>
<keyword id="KW-1185">Reference proteome</keyword>
<keyword id="KW-0732">Signal</keyword>
<keyword id="KW-0812">Transmembrane</keyword>
<keyword id="KW-1133">Transmembrane helix</keyword>
<keyword id="KW-0879">Wnt signaling pathway</keyword>
<proteinExistence type="evidence at protein level"/>
<dbReference type="EMBL" id="DQ116029">
    <property type="protein sequence ID" value="ABA12132.1"/>
    <property type="molecule type" value="mRNA"/>
</dbReference>
<dbReference type="SMR" id="Q1AGV6"/>
<dbReference type="GlyCosmos" id="Q1AGV6">
    <property type="glycosylation" value="3 sites, No reported glycans"/>
</dbReference>
<dbReference type="GeneID" id="734219"/>
<dbReference type="KEGG" id="xla:734219"/>
<dbReference type="AGR" id="Xenbase:XB-GENE-6251681"/>
<dbReference type="CTD" id="734219"/>
<dbReference type="Xenbase" id="XB-GENE-6251681">
    <property type="gene designation" value="sdc4.L"/>
</dbReference>
<dbReference type="OrthoDB" id="10044468at2759"/>
<dbReference type="Proteomes" id="UP000186698">
    <property type="component" value="Chromosome 9_10L"/>
</dbReference>
<dbReference type="Bgee" id="734219">
    <property type="expression patterns" value="Expressed in zone of skin and 19 other cell types or tissues"/>
</dbReference>
<dbReference type="GO" id="GO:0009986">
    <property type="term" value="C:cell surface"/>
    <property type="evidence" value="ECO:0007669"/>
    <property type="project" value="TreeGrafter"/>
</dbReference>
<dbReference type="GO" id="GO:0016020">
    <property type="term" value="C:membrane"/>
    <property type="evidence" value="ECO:0000303"/>
    <property type="project" value="UniProtKB"/>
</dbReference>
<dbReference type="GO" id="GO:0005109">
    <property type="term" value="F:frizzled binding"/>
    <property type="evidence" value="ECO:0000353"/>
    <property type="project" value="UniProtKB"/>
</dbReference>
<dbReference type="GO" id="GO:0016477">
    <property type="term" value="P:cell migration"/>
    <property type="evidence" value="ECO:0007669"/>
    <property type="project" value="TreeGrafter"/>
</dbReference>
<dbReference type="GO" id="GO:0060027">
    <property type="term" value="P:convergent extension involved in gastrulation"/>
    <property type="evidence" value="ECO:0000315"/>
    <property type="project" value="UniProtKB"/>
</dbReference>
<dbReference type="GO" id="GO:0001843">
    <property type="term" value="P:neural tube closure"/>
    <property type="evidence" value="ECO:0000315"/>
    <property type="project" value="UniProtKB"/>
</dbReference>
<dbReference type="GO" id="GO:0008104">
    <property type="term" value="P:protein localization"/>
    <property type="evidence" value="ECO:0000315"/>
    <property type="project" value="UniProtKB"/>
</dbReference>
<dbReference type="GO" id="GO:0016055">
    <property type="term" value="P:Wnt signaling pathway"/>
    <property type="evidence" value="ECO:0000353"/>
    <property type="project" value="UniProtKB"/>
</dbReference>
<dbReference type="InterPro" id="IPR001050">
    <property type="entry name" value="Syndecan"/>
</dbReference>
<dbReference type="InterPro" id="IPR027789">
    <property type="entry name" value="Syndecan/Neurexin_dom"/>
</dbReference>
<dbReference type="PANTHER" id="PTHR10915">
    <property type="entry name" value="SYNDECAN"/>
    <property type="match status" value="1"/>
</dbReference>
<dbReference type="PANTHER" id="PTHR10915:SF1">
    <property type="entry name" value="SYNDECAN"/>
    <property type="match status" value="1"/>
</dbReference>
<dbReference type="Pfam" id="PF01034">
    <property type="entry name" value="Syndecan"/>
    <property type="match status" value="1"/>
</dbReference>